<gene>
    <name evidence="1" type="primary">secB</name>
    <name type="ordered locus">RSc0356</name>
    <name type="ORF">RS03323</name>
</gene>
<comment type="function">
    <text evidence="1">One of the proteins required for the normal export of preproteins out of the cell cytoplasm. It is a molecular chaperone that binds to a subset of precursor proteins, maintaining them in a translocation-competent state. It also specifically binds to its receptor SecA.</text>
</comment>
<comment type="subunit">
    <text evidence="1">Homotetramer, a dimer of dimers. One homotetramer interacts with 1 SecA dimer.</text>
</comment>
<comment type="subcellular location">
    <subcellularLocation>
        <location evidence="1">Cytoplasm</location>
    </subcellularLocation>
</comment>
<comment type="similarity">
    <text evidence="1">Belongs to the SecB family.</text>
</comment>
<protein>
    <recommendedName>
        <fullName evidence="1">Protein-export protein SecB</fullName>
    </recommendedName>
</protein>
<name>SECB_RALN1</name>
<keyword id="KW-0143">Chaperone</keyword>
<keyword id="KW-0963">Cytoplasm</keyword>
<keyword id="KW-0653">Protein transport</keyword>
<keyword id="KW-1185">Reference proteome</keyword>
<keyword id="KW-0811">Translocation</keyword>
<keyword id="KW-0813">Transport</keyword>
<sequence>MSDQQQQQPGQDGQPFFNIQRVYLKDLSLEQPNSPHIFLEQEQPTVEVQVDVAATQLAEGVFEVTVIGTVTTKVKEKVAFLVEAKQAGIFDIRNVPVEQMDPLLGIACPTIVYPYLRSNIADTIGRAGFQPIHLAEINFQALYEQRLASAMEEAQAAGGNGGIVMPDGSKATH</sequence>
<reference key="1">
    <citation type="journal article" date="2002" name="Nature">
        <title>Genome sequence of the plant pathogen Ralstonia solanacearum.</title>
        <authorList>
            <person name="Salanoubat M."/>
            <person name="Genin S."/>
            <person name="Artiguenave F."/>
            <person name="Gouzy J."/>
            <person name="Mangenot S."/>
            <person name="Arlat M."/>
            <person name="Billault A."/>
            <person name="Brottier P."/>
            <person name="Camus J.-C."/>
            <person name="Cattolico L."/>
            <person name="Chandler M."/>
            <person name="Choisne N."/>
            <person name="Claudel-Renard C."/>
            <person name="Cunnac S."/>
            <person name="Demange N."/>
            <person name="Gaspin C."/>
            <person name="Lavie M."/>
            <person name="Moisan A."/>
            <person name="Robert C."/>
            <person name="Saurin W."/>
            <person name="Schiex T."/>
            <person name="Siguier P."/>
            <person name="Thebault P."/>
            <person name="Whalen M."/>
            <person name="Wincker P."/>
            <person name="Levy M."/>
            <person name="Weissenbach J."/>
            <person name="Boucher C.A."/>
        </authorList>
    </citation>
    <scope>NUCLEOTIDE SEQUENCE [LARGE SCALE GENOMIC DNA]</scope>
    <source>
        <strain>ATCC BAA-1114 / GMI1000</strain>
    </source>
</reference>
<proteinExistence type="inferred from homology"/>
<accession>Q8Y2I0</accession>
<organism>
    <name type="scientific">Ralstonia nicotianae (strain ATCC BAA-1114 / GMI1000)</name>
    <name type="common">Ralstonia solanacearum</name>
    <dbReference type="NCBI Taxonomy" id="267608"/>
    <lineage>
        <taxon>Bacteria</taxon>
        <taxon>Pseudomonadati</taxon>
        <taxon>Pseudomonadota</taxon>
        <taxon>Betaproteobacteria</taxon>
        <taxon>Burkholderiales</taxon>
        <taxon>Burkholderiaceae</taxon>
        <taxon>Ralstonia</taxon>
        <taxon>Ralstonia solanacearum species complex</taxon>
    </lineage>
</organism>
<feature type="chain" id="PRO_0000055404" description="Protein-export protein SecB">
    <location>
        <begin position="1"/>
        <end position="173"/>
    </location>
</feature>
<dbReference type="EMBL" id="AL646052">
    <property type="protein sequence ID" value="CAD13884.1"/>
    <property type="molecule type" value="Genomic_DNA"/>
</dbReference>
<dbReference type="RefSeq" id="WP_011000319.1">
    <property type="nucleotide sequence ID" value="NC_003295.1"/>
</dbReference>
<dbReference type="SMR" id="Q8Y2I0"/>
<dbReference type="STRING" id="267608.RSc0356"/>
<dbReference type="EnsemblBacteria" id="CAD13884">
    <property type="protein sequence ID" value="CAD13884"/>
    <property type="gene ID" value="RSc0356"/>
</dbReference>
<dbReference type="GeneID" id="93853927"/>
<dbReference type="KEGG" id="rso:RSc0356"/>
<dbReference type="eggNOG" id="COG1952">
    <property type="taxonomic scope" value="Bacteria"/>
</dbReference>
<dbReference type="HOGENOM" id="CLU_111574_1_0_4"/>
<dbReference type="Proteomes" id="UP000001436">
    <property type="component" value="Chromosome"/>
</dbReference>
<dbReference type="GO" id="GO:0005737">
    <property type="term" value="C:cytoplasm"/>
    <property type="evidence" value="ECO:0007669"/>
    <property type="project" value="UniProtKB-SubCell"/>
</dbReference>
<dbReference type="GO" id="GO:0051082">
    <property type="term" value="F:unfolded protein binding"/>
    <property type="evidence" value="ECO:0007669"/>
    <property type="project" value="InterPro"/>
</dbReference>
<dbReference type="GO" id="GO:0006457">
    <property type="term" value="P:protein folding"/>
    <property type="evidence" value="ECO:0007669"/>
    <property type="project" value="UniProtKB-UniRule"/>
</dbReference>
<dbReference type="GO" id="GO:0051262">
    <property type="term" value="P:protein tetramerization"/>
    <property type="evidence" value="ECO:0007669"/>
    <property type="project" value="InterPro"/>
</dbReference>
<dbReference type="GO" id="GO:0015031">
    <property type="term" value="P:protein transport"/>
    <property type="evidence" value="ECO:0007669"/>
    <property type="project" value="UniProtKB-UniRule"/>
</dbReference>
<dbReference type="Gene3D" id="3.10.420.10">
    <property type="entry name" value="SecB-like"/>
    <property type="match status" value="1"/>
</dbReference>
<dbReference type="HAMAP" id="MF_00821">
    <property type="entry name" value="SecB"/>
    <property type="match status" value="1"/>
</dbReference>
<dbReference type="InterPro" id="IPR003708">
    <property type="entry name" value="SecB"/>
</dbReference>
<dbReference type="InterPro" id="IPR035958">
    <property type="entry name" value="SecB-like_sf"/>
</dbReference>
<dbReference type="NCBIfam" id="NF004394">
    <property type="entry name" value="PRK05751.1-5"/>
    <property type="match status" value="1"/>
</dbReference>
<dbReference type="NCBIfam" id="TIGR00809">
    <property type="entry name" value="secB"/>
    <property type="match status" value="1"/>
</dbReference>
<dbReference type="PANTHER" id="PTHR36918">
    <property type="match status" value="1"/>
</dbReference>
<dbReference type="PANTHER" id="PTHR36918:SF1">
    <property type="entry name" value="PROTEIN-EXPORT PROTEIN SECB"/>
    <property type="match status" value="1"/>
</dbReference>
<dbReference type="Pfam" id="PF02556">
    <property type="entry name" value="SecB"/>
    <property type="match status" value="1"/>
</dbReference>
<dbReference type="PRINTS" id="PR01594">
    <property type="entry name" value="SECBCHAPRONE"/>
</dbReference>
<dbReference type="SUPFAM" id="SSF54611">
    <property type="entry name" value="SecB-like"/>
    <property type="match status" value="1"/>
</dbReference>
<evidence type="ECO:0000255" key="1">
    <source>
        <dbReference type="HAMAP-Rule" id="MF_00821"/>
    </source>
</evidence>